<dbReference type="EMBL" id="CP000896">
    <property type="protein sequence ID" value="ABX81790.1"/>
    <property type="molecule type" value="Genomic_DNA"/>
</dbReference>
<dbReference type="RefSeq" id="WP_012243121.1">
    <property type="nucleotide sequence ID" value="NC_010163.1"/>
</dbReference>
<dbReference type="SMR" id="A9NHG0"/>
<dbReference type="STRING" id="441768.ACL_1191"/>
<dbReference type="GeneID" id="41339330"/>
<dbReference type="KEGG" id="acl:ACL_1191"/>
<dbReference type="eggNOG" id="COG0228">
    <property type="taxonomic scope" value="Bacteria"/>
</dbReference>
<dbReference type="HOGENOM" id="CLU_100590_5_2_14"/>
<dbReference type="OrthoDB" id="9807878at2"/>
<dbReference type="Proteomes" id="UP000008558">
    <property type="component" value="Chromosome"/>
</dbReference>
<dbReference type="GO" id="GO:0005737">
    <property type="term" value="C:cytoplasm"/>
    <property type="evidence" value="ECO:0007669"/>
    <property type="project" value="UniProtKB-ARBA"/>
</dbReference>
<dbReference type="GO" id="GO:0015935">
    <property type="term" value="C:small ribosomal subunit"/>
    <property type="evidence" value="ECO:0007669"/>
    <property type="project" value="TreeGrafter"/>
</dbReference>
<dbReference type="GO" id="GO:0003735">
    <property type="term" value="F:structural constituent of ribosome"/>
    <property type="evidence" value="ECO:0007669"/>
    <property type="project" value="InterPro"/>
</dbReference>
<dbReference type="GO" id="GO:0006412">
    <property type="term" value="P:translation"/>
    <property type="evidence" value="ECO:0007669"/>
    <property type="project" value="UniProtKB-UniRule"/>
</dbReference>
<dbReference type="Gene3D" id="3.30.1320.10">
    <property type="match status" value="1"/>
</dbReference>
<dbReference type="HAMAP" id="MF_00385">
    <property type="entry name" value="Ribosomal_bS16"/>
    <property type="match status" value="1"/>
</dbReference>
<dbReference type="InterPro" id="IPR000307">
    <property type="entry name" value="Ribosomal_bS16"/>
</dbReference>
<dbReference type="InterPro" id="IPR023803">
    <property type="entry name" value="Ribosomal_bS16_dom_sf"/>
</dbReference>
<dbReference type="NCBIfam" id="TIGR00002">
    <property type="entry name" value="S16"/>
    <property type="match status" value="1"/>
</dbReference>
<dbReference type="PANTHER" id="PTHR12919">
    <property type="entry name" value="30S RIBOSOMAL PROTEIN S16"/>
    <property type="match status" value="1"/>
</dbReference>
<dbReference type="PANTHER" id="PTHR12919:SF20">
    <property type="entry name" value="SMALL RIBOSOMAL SUBUNIT PROTEIN BS16M"/>
    <property type="match status" value="1"/>
</dbReference>
<dbReference type="Pfam" id="PF00886">
    <property type="entry name" value="Ribosomal_S16"/>
    <property type="match status" value="1"/>
</dbReference>
<dbReference type="SUPFAM" id="SSF54565">
    <property type="entry name" value="Ribosomal protein S16"/>
    <property type="match status" value="1"/>
</dbReference>
<name>RS16_ACHLI</name>
<sequence length="80" mass="9021">MAVKLRLQRFGNHKRPFYRIVAADAKAPRDGKFLEIVGTYEPIKGAVAVDSEKVQAWMNNGAQPTDTVKSLFKKFNVLNK</sequence>
<comment type="similarity">
    <text evidence="1">Belongs to the bacterial ribosomal protein bS16 family.</text>
</comment>
<gene>
    <name evidence="1" type="primary">rpsP</name>
    <name type="ordered locus">ACL_1191</name>
</gene>
<protein>
    <recommendedName>
        <fullName evidence="1">Small ribosomal subunit protein bS16</fullName>
    </recommendedName>
    <alternativeName>
        <fullName evidence="2">30S ribosomal protein S16</fullName>
    </alternativeName>
</protein>
<proteinExistence type="inferred from homology"/>
<organism>
    <name type="scientific">Acholeplasma laidlawii (strain PG-8A)</name>
    <dbReference type="NCBI Taxonomy" id="441768"/>
    <lineage>
        <taxon>Bacteria</taxon>
        <taxon>Bacillati</taxon>
        <taxon>Mycoplasmatota</taxon>
        <taxon>Mollicutes</taxon>
        <taxon>Acholeplasmatales</taxon>
        <taxon>Acholeplasmataceae</taxon>
        <taxon>Acholeplasma</taxon>
    </lineage>
</organism>
<evidence type="ECO:0000255" key="1">
    <source>
        <dbReference type="HAMAP-Rule" id="MF_00385"/>
    </source>
</evidence>
<evidence type="ECO:0000305" key="2"/>
<reference key="1">
    <citation type="journal article" date="2011" name="J. Bacteriol.">
        <title>Complete genome and proteome of Acholeplasma laidlawii.</title>
        <authorList>
            <person name="Lazarev V.N."/>
            <person name="Levitskii S.A."/>
            <person name="Basovskii Y.I."/>
            <person name="Chukin M.M."/>
            <person name="Akopian T.A."/>
            <person name="Vereshchagin V.V."/>
            <person name="Kostrjukova E.S."/>
            <person name="Kovaleva G.Y."/>
            <person name="Kazanov M.D."/>
            <person name="Malko D.B."/>
            <person name="Vitreschak A.G."/>
            <person name="Sernova N.V."/>
            <person name="Gelfand M.S."/>
            <person name="Demina I.A."/>
            <person name="Serebryakova M.V."/>
            <person name="Galyamina M.A."/>
            <person name="Vtyurin N.N."/>
            <person name="Rogov S.I."/>
            <person name="Alexeev D.G."/>
            <person name="Ladygina V.G."/>
            <person name="Govorun V.M."/>
        </authorList>
    </citation>
    <scope>NUCLEOTIDE SEQUENCE [LARGE SCALE GENOMIC DNA]</scope>
    <source>
        <strain>PG-8A</strain>
    </source>
</reference>
<accession>A9NHG0</accession>
<feature type="chain" id="PRO_1000080134" description="Small ribosomal subunit protein bS16">
    <location>
        <begin position="1"/>
        <end position="80"/>
    </location>
</feature>
<keyword id="KW-1185">Reference proteome</keyword>
<keyword id="KW-0687">Ribonucleoprotein</keyword>
<keyword id="KW-0689">Ribosomal protein</keyword>